<protein>
    <recommendedName>
        <fullName evidence="3">Polyketide transferase grgF</fullName>
        <ecNumber evidence="1">2.3.-.-</ecNumber>
    </recommendedName>
    <alternativeName>
        <fullName evidence="2">Gregatin A biosynthesis cluster protein F</fullName>
    </alternativeName>
    <alternativeName>
        <fullName evidence="2">Hydrolase grgF</fullName>
    </alternativeName>
</protein>
<reference evidence="4" key="1">
    <citation type="journal article" date="2020" name="J. Am. Chem. Soc.">
        <title>Molecular basis for the biosynthesis of an unusual chain-fused polyketide gregatin A.</title>
        <authorList>
            <person name="Wang W.G."/>
            <person name="Wang H."/>
            <person name="Du L.Q."/>
            <person name="Li M."/>
            <person name="Chen L."/>
            <person name="Yu J."/>
            <person name="Cheng G.G."/>
            <person name="Zhan M.T."/>
            <person name="Hu Q.F."/>
            <person name="Zhang L."/>
            <person name="Yao M."/>
            <person name="Matsuda Y."/>
        </authorList>
    </citation>
    <scope>NUCLEOTIDE SEQUENCE [GENOMIC DNA]</scope>
    <scope>X-RAY CRYSTALLOGRAPHY (1.90 ANGSTROMS)</scope>
    <scope>FUNCTION</scope>
    <scope>CATALYTIC ACTIVITY</scope>
    <scope>ACTIVE SITE</scope>
    <scope>PATHWAY</scope>
    <scope>MUTAGENESIS OF CYS-115</scope>
</reference>
<comment type="function">
    <text evidence="1">Polyketide transferase; part of the gene cluster that mediates the biosynthesis of gregatin A, a fungal polyketide featuring an alkylated furanone core (PubMed:32275405). The PKS grgA synthesizes C11 and C4 polyketide chains in the presence and absence of the trans-enoyl reductase grgB, respectively (PubMed:32275405). The polyketide transferase grgF is then responsible for the fusion of the two carbon chains to produce the furanone skeleton of gregatin A (PubMed:32275405). GrgF first undergoes a conformational change to an open form, and the active site Cys-115 is acylated by the C11 chain. After the elimination of the phosphopantetheinyl chain, the second polyketide chain of four carbons long is delivered adjacent to the enzyme-bound C11 chain. The catalytic histidine, His-269, deprotonates a proton from C-2 of the long chain, and the resultant carbanion attacks the C-1 carbonyl of the crotonyl group to perform Claisen condensation, by which the phosphopantetheinyl chain is released. Eventually, hydrolysis of the thioester linkage probably by a His-269-activated water molecule completes the reaction to afford the grgF final product (PubMed:32275405). Next, the cytochrome P450 monooxygenase grgG accepts the unstable grgF final product as substrate and performs the oxidative cyclization to furnish the gregatin scaffold and leads to the formation of desmethylgregatin A (PubMed:32275405). Finally, the O-methyltransferase grgD methylates the carboxyl group of desmethylgregatin A to provide gregatin A (PubMed:32275405).</text>
</comment>
<comment type="pathway">
    <text evidence="1">Secondary metabolite biosynthesis.</text>
</comment>
<comment type="subunit">
    <text evidence="1 4">Homodimer.</text>
</comment>
<comment type="similarity">
    <text evidence="3">Belongs to the polyketide transferase af380 family.</text>
</comment>
<organism>
    <name type="scientific">Penicillium sp</name>
    <dbReference type="NCBI Taxonomy" id="5081"/>
    <lineage>
        <taxon>Eukaryota</taxon>
        <taxon>Fungi</taxon>
        <taxon>Dikarya</taxon>
        <taxon>Ascomycota</taxon>
        <taxon>Pezizomycotina</taxon>
        <taxon>Eurotiomycetes</taxon>
        <taxon>Eurotiomycetidae</taxon>
        <taxon>Eurotiales</taxon>
        <taxon>Aspergillaceae</taxon>
        <taxon>Penicillium</taxon>
    </lineage>
</organism>
<sequence>MTASTLPRSDVEFTTLDGLTLRGWLFPASQRGPALIMSPGFNMPKDAILPDIAKWFQEHGITCLLYDPRGIGASDGEPRNDIDARQQAEHLHDAVTWFKENPLVNEKQIALWGLCFGGNVTLAAAAFDKRVAAAIAVAPLIDSTGNPERRQPILELAMHDRASRLDGEEPMYLPYVNEDGSIPNGLQLAAEMMPALERLGIPVENRISVQTYYKSLSWNILNVVQYISPTPAMMVTPELDVSCPTEDQLNCFEHMKEPKELDILKGKGHLDWVFGDVESILNRQLDFLKRHMAF</sequence>
<feature type="chain" id="PRO_0000457338" description="Polyketide transferase grgF">
    <location>
        <begin position="1"/>
        <end position="294"/>
    </location>
</feature>
<feature type="active site" evidence="1 4">
    <location>
        <position position="115"/>
    </location>
</feature>
<feature type="active site" evidence="1 4">
    <location>
        <position position="240"/>
    </location>
</feature>
<feature type="active site" evidence="1 4">
    <location>
        <position position="269"/>
    </location>
</feature>
<feature type="mutagenesis site" description="Impairs catalytic activity." evidence="1">
    <original>C</original>
    <variation>A</variation>
    <variation>S</variation>
    <location>
        <position position="115"/>
    </location>
</feature>
<accession>A0A6F8RQ06</accession>
<accession>A0A6P3CW70</accession>
<proteinExistence type="evidence at protein level"/>
<gene>
    <name evidence="2" type="primary">grgF</name>
</gene>
<name>GRGF_PENSQ</name>
<evidence type="ECO:0000269" key="1">
    <source>
    </source>
</evidence>
<evidence type="ECO:0000303" key="2">
    <source>
    </source>
</evidence>
<evidence type="ECO:0000305" key="3"/>
<evidence type="ECO:0007744" key="4">
    <source>
        <dbReference type="PDB" id="6LZH"/>
    </source>
</evidence>
<dbReference type="EC" id="2.3.-.-" evidence="1"/>
<dbReference type="EMBL" id="LC522971">
    <property type="protein sequence ID" value="BCA42573.1"/>
    <property type="molecule type" value="Genomic_DNA"/>
</dbReference>
<dbReference type="PDB" id="6LZH">
    <property type="method" value="X-ray"/>
    <property type="resolution" value="1.90 A"/>
    <property type="chains" value="A/B=1-294"/>
</dbReference>
<dbReference type="PDBsum" id="6LZH"/>
<dbReference type="SMR" id="A0A6F8RQ06"/>
<dbReference type="ESTHER" id="pensq-GrgF">
    <property type="family name" value="Thiohydrolase"/>
</dbReference>
<dbReference type="GO" id="GO:0016740">
    <property type="term" value="F:transferase activity"/>
    <property type="evidence" value="ECO:0007669"/>
    <property type="project" value="UniProtKB-KW"/>
</dbReference>
<dbReference type="GO" id="GO:0017000">
    <property type="term" value="P:antibiotic biosynthetic process"/>
    <property type="evidence" value="ECO:0007669"/>
    <property type="project" value="UniProtKB-ARBA"/>
</dbReference>
<dbReference type="GO" id="GO:0072330">
    <property type="term" value="P:monocarboxylic acid biosynthetic process"/>
    <property type="evidence" value="ECO:0007669"/>
    <property type="project" value="UniProtKB-ARBA"/>
</dbReference>
<dbReference type="Gene3D" id="1.10.10.800">
    <property type="match status" value="1"/>
</dbReference>
<dbReference type="Gene3D" id="3.40.50.1820">
    <property type="entry name" value="alpha/beta hydrolase"/>
    <property type="match status" value="1"/>
</dbReference>
<dbReference type="InterPro" id="IPR000073">
    <property type="entry name" value="AB_hydrolase_1"/>
</dbReference>
<dbReference type="InterPro" id="IPR029058">
    <property type="entry name" value="AB_hydrolase_fold"/>
</dbReference>
<dbReference type="InterPro" id="IPR051411">
    <property type="entry name" value="Polyketide_trans_af380"/>
</dbReference>
<dbReference type="PANTHER" id="PTHR47751:SF2">
    <property type="entry name" value="DLTD N-TERMINAL DOMAIN PROTEIN (AFU_ORTHOLOGUE AFUA_8G00380)-RELATED"/>
    <property type="match status" value="1"/>
</dbReference>
<dbReference type="PANTHER" id="PTHR47751">
    <property type="entry name" value="SUPERFAMILY HYDROLASE, PUTATIVE (AFU_ORTHOLOGUE AFUA_2G16580)-RELATED"/>
    <property type="match status" value="1"/>
</dbReference>
<dbReference type="Pfam" id="PF00561">
    <property type="entry name" value="Abhydrolase_1"/>
    <property type="match status" value="1"/>
</dbReference>
<dbReference type="SUPFAM" id="SSF53474">
    <property type="entry name" value="alpha/beta-Hydrolases"/>
    <property type="match status" value="1"/>
</dbReference>
<keyword id="KW-0002">3D-structure</keyword>
<keyword id="KW-0808">Transferase</keyword>